<reference key="1">
    <citation type="journal article" date="2008" name="Environ. Microbiol.">
        <title>The genome of Erwinia tasmaniensis strain Et1/99, a non-pathogenic bacterium in the genus Erwinia.</title>
        <authorList>
            <person name="Kube M."/>
            <person name="Migdoll A.M."/>
            <person name="Mueller I."/>
            <person name="Kuhl H."/>
            <person name="Beck A."/>
            <person name="Reinhardt R."/>
            <person name="Geider K."/>
        </authorList>
    </citation>
    <scope>NUCLEOTIDE SEQUENCE [LARGE SCALE GENOMIC DNA]</scope>
    <source>
        <strain>DSM 17950 / CFBP 7177 / CIP 109463 / NCPPB 4357 / Et1/99</strain>
    </source>
</reference>
<protein>
    <recommendedName>
        <fullName evidence="1">Transcription antitermination protein NusB</fullName>
    </recommendedName>
    <alternativeName>
        <fullName evidence="1">Antitermination factor NusB</fullName>
    </alternativeName>
</protein>
<dbReference type="EMBL" id="CU468135">
    <property type="protein sequence ID" value="CAO97576.1"/>
    <property type="molecule type" value="Genomic_DNA"/>
</dbReference>
<dbReference type="RefSeq" id="WP_012442241.1">
    <property type="nucleotide sequence ID" value="NC_010694.1"/>
</dbReference>
<dbReference type="SMR" id="B2VHS8"/>
<dbReference type="STRING" id="465817.ETA_25300"/>
<dbReference type="KEGG" id="eta:ETA_25300"/>
<dbReference type="eggNOG" id="COG0781">
    <property type="taxonomic scope" value="Bacteria"/>
</dbReference>
<dbReference type="HOGENOM" id="CLU_087843_4_1_6"/>
<dbReference type="OrthoDB" id="9789556at2"/>
<dbReference type="Proteomes" id="UP000001726">
    <property type="component" value="Chromosome"/>
</dbReference>
<dbReference type="GO" id="GO:0005829">
    <property type="term" value="C:cytosol"/>
    <property type="evidence" value="ECO:0007669"/>
    <property type="project" value="TreeGrafter"/>
</dbReference>
<dbReference type="GO" id="GO:0003723">
    <property type="term" value="F:RNA binding"/>
    <property type="evidence" value="ECO:0007669"/>
    <property type="project" value="UniProtKB-UniRule"/>
</dbReference>
<dbReference type="GO" id="GO:0006353">
    <property type="term" value="P:DNA-templated transcription termination"/>
    <property type="evidence" value="ECO:0007669"/>
    <property type="project" value="UniProtKB-UniRule"/>
</dbReference>
<dbReference type="GO" id="GO:0031564">
    <property type="term" value="P:transcription antitermination"/>
    <property type="evidence" value="ECO:0007669"/>
    <property type="project" value="UniProtKB-KW"/>
</dbReference>
<dbReference type="CDD" id="cd00619">
    <property type="entry name" value="Terminator_NusB"/>
    <property type="match status" value="1"/>
</dbReference>
<dbReference type="FunFam" id="1.10.940.10:FF:000001">
    <property type="entry name" value="Transcription antitermination factor NusB"/>
    <property type="match status" value="1"/>
</dbReference>
<dbReference type="Gene3D" id="1.10.940.10">
    <property type="entry name" value="NusB-like"/>
    <property type="match status" value="1"/>
</dbReference>
<dbReference type="HAMAP" id="MF_00073">
    <property type="entry name" value="NusB"/>
    <property type="match status" value="1"/>
</dbReference>
<dbReference type="InterPro" id="IPR035926">
    <property type="entry name" value="NusB-like_sf"/>
</dbReference>
<dbReference type="InterPro" id="IPR011605">
    <property type="entry name" value="NusB_fam"/>
</dbReference>
<dbReference type="InterPro" id="IPR006027">
    <property type="entry name" value="NusB_RsmB_TIM44"/>
</dbReference>
<dbReference type="NCBIfam" id="TIGR01951">
    <property type="entry name" value="nusB"/>
    <property type="match status" value="1"/>
</dbReference>
<dbReference type="PANTHER" id="PTHR11078:SF3">
    <property type="entry name" value="ANTITERMINATION NUSB DOMAIN-CONTAINING PROTEIN"/>
    <property type="match status" value="1"/>
</dbReference>
<dbReference type="PANTHER" id="PTHR11078">
    <property type="entry name" value="N UTILIZATION SUBSTANCE PROTEIN B-RELATED"/>
    <property type="match status" value="1"/>
</dbReference>
<dbReference type="Pfam" id="PF01029">
    <property type="entry name" value="NusB"/>
    <property type="match status" value="1"/>
</dbReference>
<dbReference type="SUPFAM" id="SSF48013">
    <property type="entry name" value="NusB-like"/>
    <property type="match status" value="1"/>
</dbReference>
<sequence length="139" mass="15733">MKPAARRRARECAVQALYSWQISKNDIADVEYQFLAEQDVKDVDITYFRELVGGVATNSAYLDGLMKPYLSRQLEELGQVEKAILRISLFELSKRSDVPYKVAINEGIELAKVFGAEDSHKFVNGVLDKAAPQIRPNRK</sequence>
<name>NUSB_ERWT9</name>
<evidence type="ECO:0000255" key="1">
    <source>
        <dbReference type="HAMAP-Rule" id="MF_00073"/>
    </source>
</evidence>
<keyword id="KW-1185">Reference proteome</keyword>
<keyword id="KW-0694">RNA-binding</keyword>
<keyword id="KW-0804">Transcription</keyword>
<keyword id="KW-0889">Transcription antitermination</keyword>
<keyword id="KW-0805">Transcription regulation</keyword>
<proteinExistence type="inferred from homology"/>
<organism>
    <name type="scientific">Erwinia tasmaniensis (strain DSM 17950 / CFBP 7177 / CIP 109463 / NCPPB 4357 / Et1/99)</name>
    <dbReference type="NCBI Taxonomy" id="465817"/>
    <lineage>
        <taxon>Bacteria</taxon>
        <taxon>Pseudomonadati</taxon>
        <taxon>Pseudomonadota</taxon>
        <taxon>Gammaproteobacteria</taxon>
        <taxon>Enterobacterales</taxon>
        <taxon>Erwiniaceae</taxon>
        <taxon>Erwinia</taxon>
    </lineage>
</organism>
<comment type="function">
    <text evidence="1">Involved in transcription antitermination. Required for transcription of ribosomal RNA (rRNA) genes. Binds specifically to the boxA antiterminator sequence of the ribosomal RNA (rrn) operons.</text>
</comment>
<comment type="similarity">
    <text evidence="1">Belongs to the NusB family.</text>
</comment>
<feature type="chain" id="PRO_1000092552" description="Transcription antitermination protein NusB">
    <location>
        <begin position="1"/>
        <end position="139"/>
    </location>
</feature>
<gene>
    <name evidence="1" type="primary">nusB</name>
    <name type="ordered locus">ETA_25300</name>
</gene>
<accession>B2VHS8</accession>